<organism>
    <name type="scientific">Komagataella pastoris</name>
    <name type="common">Yeast</name>
    <name type="synonym">Pichia pastoris</name>
    <dbReference type="NCBI Taxonomy" id="4922"/>
    <lineage>
        <taxon>Eukaryota</taxon>
        <taxon>Fungi</taxon>
        <taxon>Dikarya</taxon>
        <taxon>Ascomycota</taxon>
        <taxon>Saccharomycotina</taxon>
        <taxon>Pichiomycetes</taxon>
        <taxon>Pichiales</taxon>
        <taxon>Pichiaceae</taxon>
        <taxon>Komagataella</taxon>
    </lineage>
</organism>
<name>SNX4_PICPA</name>
<keyword id="KW-0072">Autophagy</keyword>
<keyword id="KW-0963">Cytoplasm</keyword>
<keyword id="KW-0446">Lipid-binding</keyword>
<keyword id="KW-0472">Membrane</keyword>
<keyword id="KW-0653">Protein transport</keyword>
<keyword id="KW-0813">Transport</keyword>
<keyword id="KW-0926">Vacuole</keyword>
<gene>
    <name type="primary">SNX4</name>
    <name evidence="8" type="synonym">ATG24</name>
    <name type="synonym">PAZ16</name>
</gene>
<sequence length="661" mass="76908">MSDQFTSIQWDRTEPEGDVPGDSNDHSQVQINSSINLIEEDQGQEQEQDDLVTTNTVVRGGNDSDSNPNEQIPPRDVYIRSKVSQPLKESDGQNFYISYLIETETNEPGLAKTKLKVRRRFSDSNFLYNCLANDFPTSIIPPLPNKQRLEYIKGDRFGEYFTTKRSIALNNFLNRISKHPLLKQAKIYHIFLEDSVNWNTFKQNLKISSNPNSTVGGGSTTSANANGELDSFSDYIMNAFKKPTYESENAKEFQEITDKSNKLQENINKIDKIYQRVVKRQSEISEDFRLFGDEFKKLNQILTEGSDTQFDKELSQQFTSFSENIYQISYDSFKLTRQVDLHYLTSLKDLDHYISQIKNMIKFKDSKLLDYEMLQNYLNKAIAEKNHLMNGNNVSGSDGAMNFISKKIGSLRGKTPGQTYSSGNETNDRINKLNEKIEFLEREVKETFELFHTFEKNLITEYQLFDRIKNDEITTNLHELSQYYLDYYNSVVNHWNDVEIPHSEHLTDELHVLQQSQLRKNLENISIDPKLDVNSKLFEHDDVRLNNDHIRSDLRSIKSQERKNEQVHKQDQEQGEEQEHEQDQVQNQEQEQEPEELSREEAEVLETPVQAQEQEQQEPEELHASQTESHTQSEPQNDNQHNFDDDGSDEGLVDVEGLEQW</sequence>
<reference key="1">
    <citation type="journal article" date="2005" name="Mol. Biol. Cell">
        <title>A sorting nexin PpAtg24 regulates vacuolar membrane dynamics during pexophagy via binding to phosphatidylinositol-3-phosphate.</title>
        <authorList>
            <person name="Ano Y."/>
            <person name="Hattori T."/>
            <person name="Oku M."/>
            <person name="Mukaiyama H."/>
            <person name="Baba M."/>
            <person name="Ohsumi Y."/>
            <person name="Kato N."/>
            <person name="Sakai Y."/>
        </authorList>
    </citation>
    <scope>NUCLEOTIDE SEQUENCE [GENOMIC DNA]</scope>
    <scope>FUNCTION</scope>
    <scope>SUBCELLULAR LOCATION</scope>
    <source>
        <strain>PPY12</strain>
    </source>
</reference>
<protein>
    <recommendedName>
        <fullName>Sorting nexin-4</fullName>
    </recommendedName>
    <alternativeName>
        <fullName evidence="8">Autophagy-related protein 24</fullName>
    </alternativeName>
    <alternativeName>
        <fullName>Pexophagy zeocin-resistant mutant protein 16</fullName>
    </alternativeName>
</protein>
<comment type="function">
    <text evidence="1 7">Sorting nexin involved in the separation or division of vacuoles throughout the entire life cycle of the cells (By similarity). Required for glucose-induced micropexophagy and ethanol-induced macropexophagy (PubMed:15563611). Involved in the fusion between the pexophagosome and the vacuole. Also involved in the separation or division of vacuoles throughout the entire life cycle of the cells (PubMed:15563611).</text>
</comment>
<comment type="subcellular location">
    <subcellularLocation>
        <location evidence="7">Cytoplasm</location>
    </subcellularLocation>
    <subcellularLocation>
        <location evidence="7">Membrane</location>
        <topology evidence="7">Peripheral membrane protein</topology>
    </subcellularLocation>
    <subcellularLocation>
        <location evidence="7">Vacuole membrane</location>
        <topology evidence="7">Peripheral membrane protein</topology>
    </subcellularLocation>
    <text>Vacuolar and other perivacuolar punctate structures.</text>
</comment>
<comment type="domain">
    <text evidence="4">The PX domain binds phosphatidylinositol 3-phosphate which is necessary for peripheral membrane localization to the perivacuolar punctate structures.</text>
</comment>
<comment type="similarity">
    <text evidence="9">Belongs to the sorting nexin family.</text>
</comment>
<feature type="chain" id="PRO_0000213816" description="Sorting nexin-4">
    <location>
        <begin position="1"/>
        <end position="661"/>
    </location>
</feature>
<feature type="domain" description="PX" evidence="5">
    <location>
        <begin position="77"/>
        <end position="198"/>
    </location>
</feature>
<feature type="region of interest" description="Disordered" evidence="6">
    <location>
        <begin position="1"/>
        <end position="49"/>
    </location>
</feature>
<feature type="region of interest" description="Disordered" evidence="6">
    <location>
        <begin position="56"/>
        <end position="75"/>
    </location>
</feature>
<feature type="region of interest" description="Disordered" evidence="6">
    <location>
        <begin position="554"/>
        <end position="661"/>
    </location>
</feature>
<feature type="compositionally biased region" description="Polar residues" evidence="6">
    <location>
        <begin position="1"/>
        <end position="10"/>
    </location>
</feature>
<feature type="compositionally biased region" description="Polar residues" evidence="6">
    <location>
        <begin position="26"/>
        <end position="36"/>
    </location>
</feature>
<feature type="compositionally biased region" description="Acidic residues" evidence="6">
    <location>
        <begin position="38"/>
        <end position="49"/>
    </location>
</feature>
<feature type="compositionally biased region" description="Polar residues" evidence="6">
    <location>
        <begin position="56"/>
        <end position="70"/>
    </location>
</feature>
<feature type="compositionally biased region" description="Basic and acidic residues" evidence="6">
    <location>
        <begin position="554"/>
        <end position="572"/>
    </location>
</feature>
<feature type="compositionally biased region" description="Polar residues" evidence="6">
    <location>
        <begin position="624"/>
        <end position="640"/>
    </location>
</feature>
<feature type="compositionally biased region" description="Acidic residues" evidence="6">
    <location>
        <begin position="645"/>
        <end position="661"/>
    </location>
</feature>
<feature type="binding site" evidence="2">
    <location>
        <position position="120"/>
    </location>
    <ligand>
        <name>a 1,2-diacyl-sn-glycero-3-phospho-(1D-myo-inositol-3-phosphate)</name>
        <dbReference type="ChEBI" id="CHEBI:58088"/>
    </ligand>
</feature>
<feature type="binding site" evidence="4">
    <location>
        <position position="122"/>
    </location>
    <ligand>
        <name>a 1,2-diacyl-sn-glycero-3-phospho-(1D-myo-inositol-3-phosphate)</name>
        <dbReference type="ChEBI" id="CHEBI:58088"/>
    </ligand>
</feature>
<feature type="binding site" evidence="4">
    <location>
        <position position="146"/>
    </location>
    <ligand>
        <name>a 1,2-diacyl-sn-glycero-3-phospho-(1D-myo-inositol-3-phosphate)</name>
        <dbReference type="ChEBI" id="CHEBI:58088"/>
    </ligand>
</feature>
<feature type="binding site" evidence="3">
    <location>
        <position position="165"/>
    </location>
    <ligand>
        <name>a 1,2-diacyl-sn-glycero-3-phospho-(1D-myo-inositol-3-phosphate)</name>
        <dbReference type="ChEBI" id="CHEBI:58088"/>
    </ligand>
</feature>
<accession>Q5H7C3</accession>
<proteinExistence type="inferred from homology"/>
<dbReference type="EMBL" id="AB191168">
    <property type="protein sequence ID" value="BAD89147.1"/>
    <property type="molecule type" value="Genomic_DNA"/>
</dbReference>
<dbReference type="SMR" id="Q5H7C3"/>
<dbReference type="GO" id="GO:0005769">
    <property type="term" value="C:early endosome"/>
    <property type="evidence" value="ECO:0007669"/>
    <property type="project" value="TreeGrafter"/>
</dbReference>
<dbReference type="GO" id="GO:0000407">
    <property type="term" value="C:phagophore assembly site"/>
    <property type="evidence" value="ECO:0007669"/>
    <property type="project" value="TreeGrafter"/>
</dbReference>
<dbReference type="GO" id="GO:0005774">
    <property type="term" value="C:vacuolar membrane"/>
    <property type="evidence" value="ECO:0007669"/>
    <property type="project" value="UniProtKB-SubCell"/>
</dbReference>
<dbReference type="GO" id="GO:0035091">
    <property type="term" value="F:phosphatidylinositol binding"/>
    <property type="evidence" value="ECO:0007669"/>
    <property type="project" value="InterPro"/>
</dbReference>
<dbReference type="GO" id="GO:0000422">
    <property type="term" value="P:autophagy of mitochondrion"/>
    <property type="evidence" value="ECO:0007669"/>
    <property type="project" value="TreeGrafter"/>
</dbReference>
<dbReference type="GO" id="GO:0032456">
    <property type="term" value="P:endocytic recycling"/>
    <property type="evidence" value="ECO:0007669"/>
    <property type="project" value="TreeGrafter"/>
</dbReference>
<dbReference type="GO" id="GO:0034727">
    <property type="term" value="P:piecemeal microautophagy of the nucleus"/>
    <property type="evidence" value="ECO:0007669"/>
    <property type="project" value="TreeGrafter"/>
</dbReference>
<dbReference type="GO" id="GO:0015031">
    <property type="term" value="P:protein transport"/>
    <property type="evidence" value="ECO:0007669"/>
    <property type="project" value="UniProtKB-KW"/>
</dbReference>
<dbReference type="GO" id="GO:0061709">
    <property type="term" value="P:reticulophagy"/>
    <property type="evidence" value="ECO:0007669"/>
    <property type="project" value="TreeGrafter"/>
</dbReference>
<dbReference type="CDD" id="cd07628">
    <property type="entry name" value="BAR_Atg24p"/>
    <property type="match status" value="1"/>
</dbReference>
<dbReference type="CDD" id="cd06863">
    <property type="entry name" value="PX_Atg24p"/>
    <property type="match status" value="1"/>
</dbReference>
<dbReference type="Gene3D" id="1.20.1270.60">
    <property type="entry name" value="Arfaptin homology (AH) domain/BAR domain"/>
    <property type="match status" value="1"/>
</dbReference>
<dbReference type="Gene3D" id="3.30.1520.10">
    <property type="entry name" value="Phox-like domain"/>
    <property type="match status" value="1"/>
</dbReference>
<dbReference type="InterPro" id="IPR027267">
    <property type="entry name" value="AH/BAR_dom_sf"/>
</dbReference>
<dbReference type="InterPro" id="IPR001683">
    <property type="entry name" value="PX_dom"/>
</dbReference>
<dbReference type="InterPro" id="IPR036871">
    <property type="entry name" value="PX_dom_sf"/>
</dbReference>
<dbReference type="PANTHER" id="PTHR45949">
    <property type="entry name" value="SORTING NEXIN-4"/>
    <property type="match status" value="1"/>
</dbReference>
<dbReference type="PANTHER" id="PTHR45949:SF2">
    <property type="entry name" value="SORTING NEXIN-4"/>
    <property type="match status" value="1"/>
</dbReference>
<dbReference type="Pfam" id="PF00787">
    <property type="entry name" value="PX"/>
    <property type="match status" value="1"/>
</dbReference>
<dbReference type="SMART" id="SM00312">
    <property type="entry name" value="PX"/>
    <property type="match status" value="1"/>
</dbReference>
<dbReference type="SUPFAM" id="SSF103657">
    <property type="entry name" value="BAR/IMD domain-like"/>
    <property type="match status" value="1"/>
</dbReference>
<dbReference type="SUPFAM" id="SSF64268">
    <property type="entry name" value="PX domain"/>
    <property type="match status" value="1"/>
</dbReference>
<dbReference type="PROSITE" id="PS50195">
    <property type="entry name" value="PX"/>
    <property type="match status" value="1"/>
</dbReference>
<evidence type="ECO:0000250" key="1">
    <source>
        <dbReference type="UniProtKB" id="P47057"/>
    </source>
</evidence>
<evidence type="ECO:0000250" key="2">
    <source>
        <dbReference type="UniProtKB" id="Q3UR97"/>
    </source>
</evidence>
<evidence type="ECO:0000250" key="3">
    <source>
        <dbReference type="UniProtKB" id="Q6P4T1"/>
    </source>
</evidence>
<evidence type="ECO:0000250" key="4">
    <source>
        <dbReference type="UniProtKB" id="Q96L94"/>
    </source>
</evidence>
<evidence type="ECO:0000255" key="5">
    <source>
        <dbReference type="PROSITE-ProRule" id="PRU00147"/>
    </source>
</evidence>
<evidence type="ECO:0000256" key="6">
    <source>
        <dbReference type="SAM" id="MobiDB-lite"/>
    </source>
</evidence>
<evidence type="ECO:0000269" key="7">
    <source>
    </source>
</evidence>
<evidence type="ECO:0000303" key="8">
    <source>
    </source>
</evidence>
<evidence type="ECO:0000305" key="9"/>